<name>MYG_LUTLU</name>
<organism>
    <name type="scientific">Lutra lutra</name>
    <name type="common">European river otter</name>
    <dbReference type="NCBI Taxonomy" id="9657"/>
    <lineage>
        <taxon>Eukaryota</taxon>
        <taxon>Metazoa</taxon>
        <taxon>Chordata</taxon>
        <taxon>Craniata</taxon>
        <taxon>Vertebrata</taxon>
        <taxon>Euteleostomi</taxon>
        <taxon>Mammalia</taxon>
        <taxon>Eutheria</taxon>
        <taxon>Laurasiatheria</taxon>
        <taxon>Carnivora</taxon>
        <taxon>Caniformia</taxon>
        <taxon>Musteloidea</taxon>
        <taxon>Mustelidae</taxon>
        <taxon>Lutrinae</taxon>
        <taxon>Lutra</taxon>
    </lineage>
</organism>
<keyword id="KW-0963">Cytoplasm</keyword>
<keyword id="KW-0903">Direct protein sequencing</keyword>
<keyword id="KW-0349">Heme</keyword>
<keyword id="KW-0408">Iron</keyword>
<keyword id="KW-0479">Metal-binding</keyword>
<keyword id="KW-0514">Muscle protein</keyword>
<keyword id="KW-0560">Oxidoreductase</keyword>
<keyword id="KW-0561">Oxygen transport</keyword>
<keyword id="KW-0597">Phosphoprotein</keyword>
<keyword id="KW-0813">Transport</keyword>
<reference key="1">
    <citation type="journal article" date="1986" name="Ukr. Biokhim. Zh.">
        <title>Primary structure of otter (Lutra lutra L.) myoglobin. II. Pepsin peptides of trypsin hydrolysate. Reconstruction of the polypeptide chain of the otter myoglobin globin component.</title>
        <authorList>
            <person name="Sukhomlinov B.F."/>
            <person name="Sergienko L.M."/>
        </authorList>
    </citation>
    <scope>PROTEIN SEQUENCE OF 2-154</scope>
</reference>
<accession>P11343</accession>
<feature type="initiator methionine" description="Removed" evidence="8">
    <location>
        <position position="1"/>
    </location>
</feature>
<feature type="chain" id="PRO_0000053312" description="Myoglobin">
    <location>
        <begin position="2"/>
        <end position="154"/>
    </location>
</feature>
<feature type="domain" description="Globin" evidence="7">
    <location>
        <begin position="2"/>
        <end position="148"/>
    </location>
</feature>
<feature type="binding site" evidence="5">
    <location>
        <position position="65"/>
    </location>
    <ligand>
        <name>nitrite</name>
        <dbReference type="ChEBI" id="CHEBI:16301"/>
    </ligand>
</feature>
<feature type="binding site" evidence="3 7">
    <location>
        <position position="65"/>
    </location>
    <ligand>
        <name>O2</name>
        <dbReference type="ChEBI" id="CHEBI:15379"/>
    </ligand>
</feature>
<feature type="binding site" description="proximal binding residue" evidence="1">
    <location>
        <position position="94"/>
    </location>
    <ligand>
        <name>heme b</name>
        <dbReference type="ChEBI" id="CHEBI:60344"/>
    </ligand>
    <ligandPart>
        <name>Fe</name>
        <dbReference type="ChEBI" id="CHEBI:18248"/>
    </ligandPart>
</feature>
<feature type="modified residue" description="Phosphoserine" evidence="6">
    <location>
        <position position="4"/>
    </location>
</feature>
<feature type="modified residue" description="Phosphothreonine" evidence="4">
    <location>
        <position position="68"/>
    </location>
</feature>
<feature type="unsure residue" description="D or N">
    <location>
        <position position="123"/>
    </location>
</feature>
<comment type="function">
    <text evidence="1">Monomeric heme protein which primary function is to store oxygen and facilitate its diffusion within muscle tissues. Reversibly binds oxygen through a pentacoordinated heme iron and enables its timely and efficient release as needed during periods of heightened demand. Depending on the oxidative conditions of tissues and cells, and in addition to its ability to bind oxygen, it also has a nitrite reductase activity whereby it regulates the production of bioactive nitric oxide. Under stress conditions, like hypoxia and anoxia, it also protects cells against reactive oxygen species thanks to its pseudoperoxidase activity.</text>
</comment>
<comment type="catalytic activity">
    <reaction evidence="1">
        <text>Fe(III)-heme b-[protein] + nitric oxide + H2O = Fe(II)-heme b-[protein] + nitrite + 2 H(+)</text>
        <dbReference type="Rhea" id="RHEA:77711"/>
        <dbReference type="Rhea" id="RHEA-COMP:18975"/>
        <dbReference type="Rhea" id="RHEA-COMP:18976"/>
        <dbReference type="ChEBI" id="CHEBI:15377"/>
        <dbReference type="ChEBI" id="CHEBI:15378"/>
        <dbReference type="ChEBI" id="CHEBI:16301"/>
        <dbReference type="ChEBI" id="CHEBI:16480"/>
        <dbReference type="ChEBI" id="CHEBI:55376"/>
        <dbReference type="ChEBI" id="CHEBI:60344"/>
    </reaction>
    <physiologicalReaction direction="right-to-left" evidence="1">
        <dbReference type="Rhea" id="RHEA:77713"/>
    </physiologicalReaction>
</comment>
<comment type="catalytic activity">
    <reaction evidence="1">
        <text>H2O2 + AH2 = A + 2 H2O</text>
        <dbReference type="Rhea" id="RHEA:30275"/>
        <dbReference type="ChEBI" id="CHEBI:13193"/>
        <dbReference type="ChEBI" id="CHEBI:15377"/>
        <dbReference type="ChEBI" id="CHEBI:16240"/>
        <dbReference type="ChEBI" id="CHEBI:17499"/>
    </reaction>
</comment>
<comment type="subunit">
    <text evidence="2">Monomeric.</text>
</comment>
<comment type="subcellular location">
    <subcellularLocation>
        <location evidence="1">Cytoplasm</location>
        <location evidence="1">Sarcoplasm</location>
    </subcellularLocation>
</comment>
<comment type="similarity">
    <text evidence="7">Belongs to the globin family.</text>
</comment>
<protein>
    <recommendedName>
        <fullName>Myoglobin</fullName>
    </recommendedName>
    <alternativeName>
        <fullName evidence="1">Nitrite reductase MB</fullName>
        <ecNumber evidence="1">1.7.-.-</ecNumber>
    </alternativeName>
    <alternativeName>
        <fullName evidence="1">Pseudoperoxidase MB</fullName>
        <ecNumber evidence="1">1.11.1.-</ecNumber>
    </alternativeName>
</protein>
<sequence length="154" mass="17168">MGLSDGEWQLVLNVWGKVEADLAGHGQEVLIRLFKGHPETLEKFDKFKHLKSEDEMKGSEDLKKHGNTVLTALGGILKKKGKHEAELKPLAQSHATKHKIPIKYLEFISEAIIQVLQSKHPGDFGADAQGAMKRALELFRNDIAAKYKELGFQG</sequence>
<gene>
    <name type="primary">MB</name>
</gene>
<dbReference type="EC" id="1.7.-.-" evidence="1"/>
<dbReference type="EC" id="1.11.1.-" evidence="1"/>
<dbReference type="PIR" id="JT0156">
    <property type="entry name" value="MYOT"/>
</dbReference>
<dbReference type="SMR" id="P11343"/>
<dbReference type="GO" id="GO:0070062">
    <property type="term" value="C:extracellular exosome"/>
    <property type="evidence" value="ECO:0007669"/>
    <property type="project" value="TreeGrafter"/>
</dbReference>
<dbReference type="GO" id="GO:0016528">
    <property type="term" value="C:sarcoplasm"/>
    <property type="evidence" value="ECO:0000250"/>
    <property type="project" value="UniProtKB"/>
</dbReference>
<dbReference type="GO" id="GO:0020037">
    <property type="term" value="F:heme binding"/>
    <property type="evidence" value="ECO:0007669"/>
    <property type="project" value="InterPro"/>
</dbReference>
<dbReference type="GO" id="GO:0046872">
    <property type="term" value="F:metal ion binding"/>
    <property type="evidence" value="ECO:0007669"/>
    <property type="project" value="UniProtKB-KW"/>
</dbReference>
<dbReference type="GO" id="GO:0098809">
    <property type="term" value="F:nitrite reductase activity"/>
    <property type="evidence" value="ECO:0000250"/>
    <property type="project" value="UniProtKB"/>
</dbReference>
<dbReference type="GO" id="GO:0019825">
    <property type="term" value="F:oxygen binding"/>
    <property type="evidence" value="ECO:0007669"/>
    <property type="project" value="InterPro"/>
</dbReference>
<dbReference type="GO" id="GO:0005344">
    <property type="term" value="F:oxygen carrier activity"/>
    <property type="evidence" value="ECO:0000250"/>
    <property type="project" value="UniProtKB"/>
</dbReference>
<dbReference type="GO" id="GO:0004601">
    <property type="term" value="F:peroxidase activity"/>
    <property type="evidence" value="ECO:0000250"/>
    <property type="project" value="UniProtKB"/>
</dbReference>
<dbReference type="GO" id="GO:0019430">
    <property type="term" value="P:removal of superoxide radicals"/>
    <property type="evidence" value="ECO:0000250"/>
    <property type="project" value="UniProtKB"/>
</dbReference>
<dbReference type="CDD" id="cd08926">
    <property type="entry name" value="Mb"/>
    <property type="match status" value="1"/>
</dbReference>
<dbReference type="Gene3D" id="6.10.140.2100">
    <property type="match status" value="1"/>
</dbReference>
<dbReference type="Gene3D" id="6.10.140.2110">
    <property type="match status" value="1"/>
</dbReference>
<dbReference type="InterPro" id="IPR000971">
    <property type="entry name" value="Globin"/>
</dbReference>
<dbReference type="InterPro" id="IPR009050">
    <property type="entry name" value="Globin-like_sf"/>
</dbReference>
<dbReference type="InterPro" id="IPR002335">
    <property type="entry name" value="Myoglobin"/>
</dbReference>
<dbReference type="PANTHER" id="PTHR47132">
    <property type="entry name" value="MYOGLOBIN"/>
    <property type="match status" value="1"/>
</dbReference>
<dbReference type="PANTHER" id="PTHR47132:SF1">
    <property type="entry name" value="MYOGLOBIN"/>
    <property type="match status" value="1"/>
</dbReference>
<dbReference type="Pfam" id="PF00042">
    <property type="entry name" value="Globin"/>
    <property type="match status" value="1"/>
</dbReference>
<dbReference type="PRINTS" id="PR00613">
    <property type="entry name" value="MYOGLOBIN"/>
</dbReference>
<dbReference type="SUPFAM" id="SSF46458">
    <property type="entry name" value="Globin-like"/>
    <property type="match status" value="1"/>
</dbReference>
<dbReference type="PROSITE" id="PS01033">
    <property type="entry name" value="GLOBIN"/>
    <property type="match status" value="1"/>
</dbReference>
<proteinExistence type="evidence at protein level"/>
<evidence type="ECO:0000250" key="1">
    <source>
        <dbReference type="UniProtKB" id="P02144"/>
    </source>
</evidence>
<evidence type="ECO:0000250" key="2">
    <source>
        <dbReference type="UniProtKB" id="P02185"/>
    </source>
</evidence>
<evidence type="ECO:0000250" key="3">
    <source>
        <dbReference type="UniProtKB" id="P02189"/>
    </source>
</evidence>
<evidence type="ECO:0000250" key="4">
    <source>
        <dbReference type="UniProtKB" id="P04247"/>
    </source>
</evidence>
<evidence type="ECO:0000250" key="5">
    <source>
        <dbReference type="UniProtKB" id="P68082"/>
    </source>
</evidence>
<evidence type="ECO:0000250" key="6">
    <source>
        <dbReference type="UniProtKB" id="Q9QZ76"/>
    </source>
</evidence>
<evidence type="ECO:0000255" key="7">
    <source>
        <dbReference type="PROSITE-ProRule" id="PRU00238"/>
    </source>
</evidence>
<evidence type="ECO:0000269" key="8">
    <source>
    </source>
</evidence>